<reference key="1">
    <citation type="journal article" date="1998" name="Biochim. Biophys. Acta">
        <title>Molecular cloning of the dnaK locus, and purification and characterization of a DnaK protein from Bacillus brevis HPD31.</title>
        <authorList>
            <person name="Tokunaga H."/>
            <person name="Yamakawa M."/>
            <person name="Mizukami M."/>
            <person name="Takagi H."/>
            <person name="Tokunaga M."/>
        </authorList>
    </citation>
    <scope>NUCLEOTIDE SEQUENCE [GENOMIC DNA]</scope>
    <source>
        <strain>HPD31</strain>
    </source>
</reference>
<keyword id="KW-0143">Chaperone</keyword>
<keyword id="KW-0963">Cytoplasm</keyword>
<keyword id="KW-0346">Stress response</keyword>
<proteinExistence type="inferred from homology"/>
<evidence type="ECO:0000255" key="1">
    <source>
        <dbReference type="HAMAP-Rule" id="MF_01151"/>
    </source>
</evidence>
<evidence type="ECO:0000256" key="2">
    <source>
        <dbReference type="SAM" id="MobiDB-lite"/>
    </source>
</evidence>
<feature type="chain" id="PRO_0000113754" description="Protein GrpE">
    <location>
        <begin position="1" status="less than"/>
        <end position="179"/>
    </location>
</feature>
<feature type="region of interest" description="Disordered" evidence="2">
    <location>
        <begin position="1"/>
        <end position="45"/>
    </location>
</feature>
<feature type="compositionally biased region" description="Basic and acidic residues" evidence="2">
    <location>
        <begin position="33"/>
        <end position="45"/>
    </location>
</feature>
<feature type="non-terminal residue">
    <location>
        <position position="1"/>
    </location>
</feature>
<gene>
    <name evidence="1" type="primary">grpE</name>
</gene>
<protein>
    <recommendedName>
        <fullName evidence="1">Protein GrpE</fullName>
    </recommendedName>
    <alternativeName>
        <fullName evidence="1">HSP-70 cofactor</fullName>
    </alternativeName>
</protein>
<comment type="function">
    <text evidence="1">Participates actively in the response to hyperosmotic and heat shock by preventing the aggregation of stress-denatured proteins, in association with DnaK and GrpE. It is the nucleotide exchange factor for DnaK and may function as a thermosensor. Unfolded proteins bind initially to DnaJ; upon interaction with the DnaJ-bound protein, DnaK hydrolyzes its bound ATP, resulting in the formation of a stable complex. GrpE releases ADP from DnaK; ATP binding to DnaK triggers the release of the substrate protein, thus completing the reaction cycle. Several rounds of ATP-dependent interactions between DnaJ, DnaK and GrpE are required for fully efficient folding.</text>
</comment>
<comment type="subunit">
    <text evidence="1">Homodimer.</text>
</comment>
<comment type="subcellular location">
    <subcellularLocation>
        <location evidence="1">Cytoplasm</location>
    </subcellularLocation>
</comment>
<comment type="similarity">
    <text evidence="1">Belongs to the GrpE family.</text>
</comment>
<dbReference type="EMBL" id="AB009842">
    <property type="protein sequence ID" value="BAA90472.1"/>
    <property type="molecule type" value="Genomic_DNA"/>
</dbReference>
<dbReference type="SMR" id="Q9LCQ6"/>
<dbReference type="STRING" id="54911.AN963_03930"/>
<dbReference type="GO" id="GO:0005737">
    <property type="term" value="C:cytoplasm"/>
    <property type="evidence" value="ECO:0007669"/>
    <property type="project" value="UniProtKB-SubCell"/>
</dbReference>
<dbReference type="GO" id="GO:0000774">
    <property type="term" value="F:adenyl-nucleotide exchange factor activity"/>
    <property type="evidence" value="ECO:0007669"/>
    <property type="project" value="InterPro"/>
</dbReference>
<dbReference type="GO" id="GO:0042803">
    <property type="term" value="F:protein homodimerization activity"/>
    <property type="evidence" value="ECO:0007669"/>
    <property type="project" value="InterPro"/>
</dbReference>
<dbReference type="GO" id="GO:0051087">
    <property type="term" value="F:protein-folding chaperone binding"/>
    <property type="evidence" value="ECO:0007669"/>
    <property type="project" value="InterPro"/>
</dbReference>
<dbReference type="GO" id="GO:0051082">
    <property type="term" value="F:unfolded protein binding"/>
    <property type="evidence" value="ECO:0007669"/>
    <property type="project" value="TreeGrafter"/>
</dbReference>
<dbReference type="GO" id="GO:0006457">
    <property type="term" value="P:protein folding"/>
    <property type="evidence" value="ECO:0007669"/>
    <property type="project" value="InterPro"/>
</dbReference>
<dbReference type="CDD" id="cd00446">
    <property type="entry name" value="GrpE"/>
    <property type="match status" value="1"/>
</dbReference>
<dbReference type="FunFam" id="2.30.22.10:FF:000001">
    <property type="entry name" value="Protein GrpE"/>
    <property type="match status" value="1"/>
</dbReference>
<dbReference type="Gene3D" id="3.90.20.20">
    <property type="match status" value="1"/>
</dbReference>
<dbReference type="Gene3D" id="2.30.22.10">
    <property type="entry name" value="Head domain of nucleotide exchange factor GrpE"/>
    <property type="match status" value="1"/>
</dbReference>
<dbReference type="HAMAP" id="MF_01151">
    <property type="entry name" value="GrpE"/>
    <property type="match status" value="1"/>
</dbReference>
<dbReference type="InterPro" id="IPR000740">
    <property type="entry name" value="GrpE"/>
</dbReference>
<dbReference type="InterPro" id="IPR013805">
    <property type="entry name" value="GrpE_coiled_coil"/>
</dbReference>
<dbReference type="InterPro" id="IPR009012">
    <property type="entry name" value="GrpE_head"/>
</dbReference>
<dbReference type="NCBIfam" id="NF010738">
    <property type="entry name" value="PRK14140.1"/>
    <property type="match status" value="1"/>
</dbReference>
<dbReference type="PANTHER" id="PTHR21237">
    <property type="entry name" value="GRPE PROTEIN"/>
    <property type="match status" value="1"/>
</dbReference>
<dbReference type="PANTHER" id="PTHR21237:SF23">
    <property type="entry name" value="GRPE PROTEIN HOMOLOG, MITOCHONDRIAL"/>
    <property type="match status" value="1"/>
</dbReference>
<dbReference type="Pfam" id="PF01025">
    <property type="entry name" value="GrpE"/>
    <property type="match status" value="1"/>
</dbReference>
<dbReference type="PRINTS" id="PR00773">
    <property type="entry name" value="GRPEPROTEIN"/>
</dbReference>
<dbReference type="SUPFAM" id="SSF58014">
    <property type="entry name" value="Coiled-coil domain of nucleotide exchange factor GrpE"/>
    <property type="match status" value="1"/>
</dbReference>
<dbReference type="SUPFAM" id="SSF51064">
    <property type="entry name" value="Head domain of nucleotide exchange factor GrpE"/>
    <property type="match status" value="1"/>
</dbReference>
<dbReference type="PROSITE" id="PS01071">
    <property type="entry name" value="GRPE"/>
    <property type="match status" value="1"/>
</dbReference>
<sequence>MSEEKLTQDPTAEEEQTETADQQESADVNWEQEAAHWKAQAEEHQNRMLRTMADMENLRRRVRKEQEDLAKYASQKVVEELLPILDNFERALAADKESMTVESLLTGVDMVYRQMVQVFDKEGLVAIAAKGQPFDPHVHQAVMQTQDPAFESGVVVEELQKGYMFKDRVVRPAMVKVNE</sequence>
<accession>Q9LCQ6</accession>
<name>GRPE_BRECH</name>
<organism>
    <name type="scientific">Brevibacillus choshinensis</name>
    <dbReference type="NCBI Taxonomy" id="54911"/>
    <lineage>
        <taxon>Bacteria</taxon>
        <taxon>Bacillati</taxon>
        <taxon>Bacillota</taxon>
        <taxon>Bacilli</taxon>
        <taxon>Bacillales</taxon>
        <taxon>Paenibacillaceae</taxon>
        <taxon>Brevibacillus</taxon>
    </lineage>
</organism>